<feature type="chain" id="PRO_0000267933" description="Large ribosomal subunit protein bL17">
    <location>
        <begin position="1"/>
        <end position="142"/>
    </location>
</feature>
<name>RL17_RICBR</name>
<keyword id="KW-0687">Ribonucleoprotein</keyword>
<keyword id="KW-0689">Ribosomal protein</keyword>
<dbReference type="EMBL" id="CP000087">
    <property type="protein sequence ID" value="ABE05118.1"/>
    <property type="molecule type" value="Genomic_DNA"/>
</dbReference>
<dbReference type="RefSeq" id="WP_011477696.1">
    <property type="nucleotide sequence ID" value="NC_007940.1"/>
</dbReference>
<dbReference type="SMR" id="Q1RHP6"/>
<dbReference type="KEGG" id="rbe:RBE_1037"/>
<dbReference type="eggNOG" id="COG0203">
    <property type="taxonomic scope" value="Bacteria"/>
</dbReference>
<dbReference type="HOGENOM" id="CLU_074407_2_0_5"/>
<dbReference type="OrthoDB" id="9809073at2"/>
<dbReference type="Proteomes" id="UP000001951">
    <property type="component" value="Chromosome"/>
</dbReference>
<dbReference type="GO" id="GO:0022625">
    <property type="term" value="C:cytosolic large ribosomal subunit"/>
    <property type="evidence" value="ECO:0007669"/>
    <property type="project" value="TreeGrafter"/>
</dbReference>
<dbReference type="GO" id="GO:0003735">
    <property type="term" value="F:structural constituent of ribosome"/>
    <property type="evidence" value="ECO:0007669"/>
    <property type="project" value="InterPro"/>
</dbReference>
<dbReference type="GO" id="GO:0006412">
    <property type="term" value="P:translation"/>
    <property type="evidence" value="ECO:0007669"/>
    <property type="project" value="UniProtKB-UniRule"/>
</dbReference>
<dbReference type="FunFam" id="3.90.1030.10:FF:000001">
    <property type="entry name" value="50S ribosomal protein L17"/>
    <property type="match status" value="1"/>
</dbReference>
<dbReference type="Gene3D" id="3.90.1030.10">
    <property type="entry name" value="Ribosomal protein L17"/>
    <property type="match status" value="1"/>
</dbReference>
<dbReference type="HAMAP" id="MF_01368">
    <property type="entry name" value="Ribosomal_bL17"/>
    <property type="match status" value="1"/>
</dbReference>
<dbReference type="InterPro" id="IPR000456">
    <property type="entry name" value="Ribosomal_bL17"/>
</dbReference>
<dbReference type="InterPro" id="IPR047859">
    <property type="entry name" value="Ribosomal_bL17_CS"/>
</dbReference>
<dbReference type="InterPro" id="IPR036373">
    <property type="entry name" value="Ribosomal_bL17_sf"/>
</dbReference>
<dbReference type="NCBIfam" id="TIGR00059">
    <property type="entry name" value="L17"/>
    <property type="match status" value="1"/>
</dbReference>
<dbReference type="PANTHER" id="PTHR14413:SF16">
    <property type="entry name" value="LARGE RIBOSOMAL SUBUNIT PROTEIN BL17M"/>
    <property type="match status" value="1"/>
</dbReference>
<dbReference type="PANTHER" id="PTHR14413">
    <property type="entry name" value="RIBOSOMAL PROTEIN L17"/>
    <property type="match status" value="1"/>
</dbReference>
<dbReference type="Pfam" id="PF01196">
    <property type="entry name" value="Ribosomal_L17"/>
    <property type="match status" value="1"/>
</dbReference>
<dbReference type="SUPFAM" id="SSF64263">
    <property type="entry name" value="Prokaryotic ribosomal protein L17"/>
    <property type="match status" value="1"/>
</dbReference>
<dbReference type="PROSITE" id="PS01167">
    <property type="entry name" value="RIBOSOMAL_L17"/>
    <property type="match status" value="1"/>
</dbReference>
<evidence type="ECO:0000255" key="1">
    <source>
        <dbReference type="HAMAP-Rule" id="MF_01368"/>
    </source>
</evidence>
<evidence type="ECO:0000305" key="2"/>
<sequence length="142" mass="16070">MRHKIKGRKLNVTSSHRKAMLANMAVSLVTHEQIKTTLPKAKELRPYIEVLVTKAKDNNLAARRNILSKIKDKKAIEKLIDVLGVRYKDRPGGYTRIVKAGFRYGDLAPIAYIEFVDRDINAKGNIPQDNSKEDIKSNKGTK</sequence>
<comment type="subunit">
    <text evidence="1">Part of the 50S ribosomal subunit. Contacts protein L32.</text>
</comment>
<comment type="similarity">
    <text evidence="1">Belongs to the bacterial ribosomal protein bL17 family.</text>
</comment>
<protein>
    <recommendedName>
        <fullName evidence="1">Large ribosomal subunit protein bL17</fullName>
    </recommendedName>
    <alternativeName>
        <fullName evidence="2">50S ribosomal protein L17</fullName>
    </alternativeName>
</protein>
<organism>
    <name type="scientific">Rickettsia bellii (strain RML369-C)</name>
    <dbReference type="NCBI Taxonomy" id="336407"/>
    <lineage>
        <taxon>Bacteria</taxon>
        <taxon>Pseudomonadati</taxon>
        <taxon>Pseudomonadota</taxon>
        <taxon>Alphaproteobacteria</taxon>
        <taxon>Rickettsiales</taxon>
        <taxon>Rickettsiaceae</taxon>
        <taxon>Rickettsieae</taxon>
        <taxon>Rickettsia</taxon>
        <taxon>belli group</taxon>
    </lineage>
</organism>
<accession>Q1RHP6</accession>
<gene>
    <name evidence="1" type="primary">rplQ</name>
    <name type="ordered locus">RBE_1037</name>
</gene>
<reference key="1">
    <citation type="journal article" date="2006" name="PLoS Genet.">
        <title>Genome sequence of Rickettsia bellii illuminates the role of amoebae in gene exchanges between intracellular pathogens.</title>
        <authorList>
            <person name="Ogata H."/>
            <person name="La Scola B."/>
            <person name="Audic S."/>
            <person name="Renesto P."/>
            <person name="Blanc G."/>
            <person name="Robert C."/>
            <person name="Fournier P.-E."/>
            <person name="Claverie J.-M."/>
            <person name="Raoult D."/>
        </authorList>
    </citation>
    <scope>NUCLEOTIDE SEQUENCE [LARGE SCALE GENOMIC DNA]</scope>
    <source>
        <strain>RML369-C</strain>
    </source>
</reference>
<proteinExistence type="inferred from homology"/>